<name>SYA_PYRAE</name>
<proteinExistence type="inferred from homology"/>
<feature type="chain" id="PRO_0000075272" description="Alanine--tRNA ligase">
    <location>
        <begin position="1"/>
        <end position="892"/>
    </location>
</feature>
<feature type="binding site" evidence="1">
    <location>
        <position position="594"/>
    </location>
    <ligand>
        <name>Zn(2+)</name>
        <dbReference type="ChEBI" id="CHEBI:29105"/>
    </ligand>
</feature>
<feature type="binding site" evidence="1">
    <location>
        <position position="598"/>
    </location>
    <ligand>
        <name>Zn(2+)</name>
        <dbReference type="ChEBI" id="CHEBI:29105"/>
    </ligand>
</feature>
<feature type="binding site" evidence="1">
    <location>
        <position position="702"/>
    </location>
    <ligand>
        <name>Zn(2+)</name>
        <dbReference type="ChEBI" id="CHEBI:29105"/>
    </ligand>
</feature>
<feature type="binding site" evidence="1">
    <location>
        <position position="706"/>
    </location>
    <ligand>
        <name>Zn(2+)</name>
        <dbReference type="ChEBI" id="CHEBI:29105"/>
    </ligand>
</feature>
<organism>
    <name type="scientific">Pyrobaculum aerophilum (strain ATCC 51768 / DSM 7523 / JCM 9630 / CIP 104966 / NBRC 100827 / IM2)</name>
    <dbReference type="NCBI Taxonomy" id="178306"/>
    <lineage>
        <taxon>Archaea</taxon>
        <taxon>Thermoproteota</taxon>
        <taxon>Thermoprotei</taxon>
        <taxon>Thermoproteales</taxon>
        <taxon>Thermoproteaceae</taxon>
        <taxon>Pyrobaculum</taxon>
    </lineage>
</organism>
<keyword id="KW-0030">Aminoacyl-tRNA synthetase</keyword>
<keyword id="KW-0067">ATP-binding</keyword>
<keyword id="KW-0963">Cytoplasm</keyword>
<keyword id="KW-0436">Ligase</keyword>
<keyword id="KW-0479">Metal-binding</keyword>
<keyword id="KW-0547">Nucleotide-binding</keyword>
<keyword id="KW-0648">Protein biosynthesis</keyword>
<keyword id="KW-1185">Reference proteome</keyword>
<keyword id="KW-0694">RNA-binding</keyword>
<keyword id="KW-0820">tRNA-binding</keyword>
<keyword id="KW-0862">Zinc</keyword>
<reference key="1">
    <citation type="journal article" date="2002" name="Proc. Natl. Acad. Sci. U.S.A.">
        <title>Genome sequence of the hyperthermophilic crenarchaeon Pyrobaculum aerophilum.</title>
        <authorList>
            <person name="Fitz-Gibbon S.T."/>
            <person name="Ladner H."/>
            <person name="Kim U.-J."/>
            <person name="Stetter K.O."/>
            <person name="Simon M.I."/>
            <person name="Miller J.H."/>
        </authorList>
    </citation>
    <scope>NUCLEOTIDE SEQUENCE [LARGE SCALE GENOMIC DNA]</scope>
    <source>
        <strain>ATCC 51768 / DSM 7523 / JCM 9630 / CIP 104966 / NBRC 100827 / IM2</strain>
    </source>
</reference>
<accession>Q8ZSV6</accession>
<gene>
    <name evidence="1" type="primary">alaS</name>
    <name type="ordered locus">PAE3565</name>
</gene>
<dbReference type="EC" id="6.1.1.7" evidence="1"/>
<dbReference type="EMBL" id="AE009441">
    <property type="protein sequence ID" value="AAL65007.1"/>
    <property type="molecule type" value="Genomic_DNA"/>
</dbReference>
<dbReference type="RefSeq" id="WP_011009474.1">
    <property type="nucleotide sequence ID" value="NC_003364.1"/>
</dbReference>
<dbReference type="SMR" id="Q8ZSV6"/>
<dbReference type="FunCoup" id="Q8ZSV6">
    <property type="interactions" value="183"/>
</dbReference>
<dbReference type="STRING" id="178306.PAE3565"/>
<dbReference type="EnsemblBacteria" id="AAL65007">
    <property type="protein sequence ID" value="AAL65007"/>
    <property type="gene ID" value="PAE3565"/>
</dbReference>
<dbReference type="GeneID" id="1466141"/>
<dbReference type="KEGG" id="pai:PAE3565"/>
<dbReference type="PATRIC" id="fig|178306.9.peg.2683"/>
<dbReference type="eggNOG" id="arCOG01255">
    <property type="taxonomic scope" value="Archaea"/>
</dbReference>
<dbReference type="HOGENOM" id="CLU_004485_4_0_2"/>
<dbReference type="InParanoid" id="Q8ZSV6"/>
<dbReference type="Proteomes" id="UP000002439">
    <property type="component" value="Chromosome"/>
</dbReference>
<dbReference type="GO" id="GO:0005737">
    <property type="term" value="C:cytoplasm"/>
    <property type="evidence" value="ECO:0007669"/>
    <property type="project" value="UniProtKB-SubCell"/>
</dbReference>
<dbReference type="GO" id="GO:0004813">
    <property type="term" value="F:alanine-tRNA ligase activity"/>
    <property type="evidence" value="ECO:0000318"/>
    <property type="project" value="GO_Central"/>
</dbReference>
<dbReference type="GO" id="GO:0002161">
    <property type="term" value="F:aminoacyl-tRNA deacylase activity"/>
    <property type="evidence" value="ECO:0000318"/>
    <property type="project" value="GO_Central"/>
</dbReference>
<dbReference type="GO" id="GO:0005524">
    <property type="term" value="F:ATP binding"/>
    <property type="evidence" value="ECO:0007669"/>
    <property type="project" value="UniProtKB-UniRule"/>
</dbReference>
<dbReference type="GO" id="GO:0000049">
    <property type="term" value="F:tRNA binding"/>
    <property type="evidence" value="ECO:0007669"/>
    <property type="project" value="UniProtKB-KW"/>
</dbReference>
<dbReference type="GO" id="GO:0008270">
    <property type="term" value="F:zinc ion binding"/>
    <property type="evidence" value="ECO:0007669"/>
    <property type="project" value="UniProtKB-UniRule"/>
</dbReference>
<dbReference type="GO" id="GO:0006419">
    <property type="term" value="P:alanyl-tRNA aminoacylation"/>
    <property type="evidence" value="ECO:0000318"/>
    <property type="project" value="GO_Central"/>
</dbReference>
<dbReference type="CDD" id="cd00673">
    <property type="entry name" value="AlaRS_core"/>
    <property type="match status" value="1"/>
</dbReference>
<dbReference type="FunFam" id="2.40.30.130:FF:000010">
    <property type="entry name" value="Alanine--tRNA ligase"/>
    <property type="match status" value="1"/>
</dbReference>
<dbReference type="FunFam" id="3.30.54.20:FF:000004">
    <property type="entry name" value="Alanine--tRNA ligase"/>
    <property type="match status" value="1"/>
</dbReference>
<dbReference type="FunFam" id="3.30.930.10:FF:000056">
    <property type="entry name" value="Alanine--tRNA ligase"/>
    <property type="match status" value="1"/>
</dbReference>
<dbReference type="FunFam" id="3.30.980.10:FF:000004">
    <property type="entry name" value="Alanine--tRNA ligase, cytoplasmic"/>
    <property type="match status" value="1"/>
</dbReference>
<dbReference type="Gene3D" id="2.40.30.130">
    <property type="match status" value="1"/>
</dbReference>
<dbReference type="Gene3D" id="3.30.930.10">
    <property type="entry name" value="Bira Bifunctional Protein, Domain 2"/>
    <property type="match status" value="1"/>
</dbReference>
<dbReference type="Gene3D" id="3.30.980.10">
    <property type="entry name" value="Threonyl-trna Synthetase, Chain A, domain 2"/>
    <property type="match status" value="1"/>
</dbReference>
<dbReference type="HAMAP" id="MF_00036_A">
    <property type="entry name" value="Ala_tRNA_synth_A"/>
    <property type="match status" value="1"/>
</dbReference>
<dbReference type="InterPro" id="IPR045864">
    <property type="entry name" value="aa-tRNA-synth_II/BPL/LPL"/>
</dbReference>
<dbReference type="InterPro" id="IPR002318">
    <property type="entry name" value="Ala-tRNA-lgiase_IIc"/>
</dbReference>
<dbReference type="InterPro" id="IPR018162">
    <property type="entry name" value="Ala-tRNA-ligase_IIc_anticod-bd"/>
</dbReference>
<dbReference type="InterPro" id="IPR018165">
    <property type="entry name" value="Ala-tRNA-synth_IIc_core"/>
</dbReference>
<dbReference type="InterPro" id="IPR018164">
    <property type="entry name" value="Ala-tRNA-synth_IIc_N"/>
</dbReference>
<dbReference type="InterPro" id="IPR022429">
    <property type="entry name" value="Ala-tRNA_lgiase_arc"/>
</dbReference>
<dbReference type="InterPro" id="IPR050058">
    <property type="entry name" value="Ala-tRNA_ligase"/>
</dbReference>
<dbReference type="InterPro" id="IPR018163">
    <property type="entry name" value="Thr/Ala-tRNA-synth_IIc_edit"/>
</dbReference>
<dbReference type="InterPro" id="IPR009000">
    <property type="entry name" value="Transl_B-barrel_sf"/>
</dbReference>
<dbReference type="InterPro" id="IPR012947">
    <property type="entry name" value="tRNA_SAD"/>
</dbReference>
<dbReference type="NCBIfam" id="TIGR03683">
    <property type="entry name" value="A-tRNA_syn_arch"/>
    <property type="match status" value="1"/>
</dbReference>
<dbReference type="NCBIfam" id="TIGR00344">
    <property type="entry name" value="alaS"/>
    <property type="match status" value="1"/>
</dbReference>
<dbReference type="PANTHER" id="PTHR11777:SF9">
    <property type="entry name" value="ALANINE--TRNA LIGASE, CYTOPLASMIC"/>
    <property type="match status" value="1"/>
</dbReference>
<dbReference type="PANTHER" id="PTHR11777">
    <property type="entry name" value="ALANYL-TRNA SYNTHETASE"/>
    <property type="match status" value="1"/>
</dbReference>
<dbReference type="Pfam" id="PF01411">
    <property type="entry name" value="tRNA-synt_2c"/>
    <property type="match status" value="1"/>
</dbReference>
<dbReference type="Pfam" id="PF07973">
    <property type="entry name" value="tRNA_SAD"/>
    <property type="match status" value="1"/>
</dbReference>
<dbReference type="PRINTS" id="PR00980">
    <property type="entry name" value="TRNASYNTHALA"/>
</dbReference>
<dbReference type="SMART" id="SM00863">
    <property type="entry name" value="tRNA_SAD"/>
    <property type="match status" value="1"/>
</dbReference>
<dbReference type="SUPFAM" id="SSF55681">
    <property type="entry name" value="Class II aaRS and biotin synthetases"/>
    <property type="match status" value="1"/>
</dbReference>
<dbReference type="SUPFAM" id="SSF101353">
    <property type="entry name" value="Putative anticodon-binding domain of alanyl-tRNA synthetase (AlaRS)"/>
    <property type="match status" value="1"/>
</dbReference>
<dbReference type="SUPFAM" id="SSF55186">
    <property type="entry name" value="ThrRS/AlaRS common domain"/>
    <property type="match status" value="1"/>
</dbReference>
<dbReference type="SUPFAM" id="SSF50447">
    <property type="entry name" value="Translation proteins"/>
    <property type="match status" value="1"/>
</dbReference>
<dbReference type="PROSITE" id="PS50860">
    <property type="entry name" value="AA_TRNA_LIGASE_II_ALA"/>
    <property type="match status" value="1"/>
</dbReference>
<comment type="function">
    <text evidence="1">Catalyzes the attachment of alanine to tRNA(Ala) in a two-step reaction: alanine is first activated by ATP to form Ala-AMP and then transferred to the acceptor end of tRNA(Ala). Also edits incorrectly charged Ser-tRNA(Ala) and Gly-tRNA(Ala) via its editing domain.</text>
</comment>
<comment type="catalytic activity">
    <reaction evidence="1">
        <text>tRNA(Ala) + L-alanine + ATP = L-alanyl-tRNA(Ala) + AMP + diphosphate</text>
        <dbReference type="Rhea" id="RHEA:12540"/>
        <dbReference type="Rhea" id="RHEA-COMP:9657"/>
        <dbReference type="Rhea" id="RHEA-COMP:9923"/>
        <dbReference type="ChEBI" id="CHEBI:30616"/>
        <dbReference type="ChEBI" id="CHEBI:33019"/>
        <dbReference type="ChEBI" id="CHEBI:57972"/>
        <dbReference type="ChEBI" id="CHEBI:78442"/>
        <dbReference type="ChEBI" id="CHEBI:78497"/>
        <dbReference type="ChEBI" id="CHEBI:456215"/>
        <dbReference type="EC" id="6.1.1.7"/>
    </reaction>
</comment>
<comment type="cofactor">
    <cofactor evidence="1">
        <name>Zn(2+)</name>
        <dbReference type="ChEBI" id="CHEBI:29105"/>
    </cofactor>
    <text evidence="1">Binds 1 zinc ion per subunit.</text>
</comment>
<comment type="subcellular location">
    <subcellularLocation>
        <location evidence="1">Cytoplasm</location>
    </subcellularLocation>
</comment>
<comment type="domain">
    <text evidence="1">Consists of three domains; the N-terminal catalytic domain, the editing domain and the C-terminal C-Ala domain. The editing domain removes incorrectly charged amino acids, while the C-Ala domain, along with tRNA(Ala), serves as a bridge to cooperatively bring together the editing and aminoacylation centers thus stimulating deacylation of misacylated tRNAs.</text>
</comment>
<comment type="similarity">
    <text evidence="1">Belongs to the class-II aminoacyl-tRNA synthetase family.</text>
</comment>
<sequence>MLSARVLKNTGFLRKQCPLCKSYFWTLRRDQEYCGDQPCVPYGFIGNPPTKISIDSLTELRERFLRFFERRGHARIKRYPVVARWRDDVYLVGASIYDFQPWVTSGAVPPPANPLVISQPSIRLTDVDKVGRSGRHLTGFEMMAHHAFNYPDKFIYWIDETAEYAYEFFTKELGIPPEEITFKESIWEGGGNAGECFEVLVRGLEVATLVFMHYEVKEGKYVELPLKIVDTGYGLERIYWLIRGTPTIYDAVFGPYLDKARRSLGFPEPPSELMGKASVYFGQMDPEVIGLEKAYDIIAEKIGVDPKWLREVFKPQEALYVLADHSRTVSWMIADGVIPSNSGAGYLARLLLRRILKNLKLVGVETPLVELFDMHLKELKADYPEVWEARNLILELVDIEERKYREILKSAPGVVKKAYEEARRRGRAGFDAEDLVSLYDSFGLPPEIVAETAKSLGVEVKIPDDFYSRLAARHAKREKQPEKTLVEMAKIADLPRTRELFYEDPYMKSFKAKVLRVIDGKYVVLDQTAFYAEGGGQPADIGILKHGGGAAKVVDVQRVGHVIVHVVEGEAPPEGSEVVGEIDWDRRYALMKMHTGTHVLIQSIRRVLGPHIWQAGAQKDIPASRIDVTHFKLPTAEEVAEIERLANSVVQANMPVHVKILPRNEAEAKYGFILYQGGVVPAREIRVVQIGPDEAPYDVQACGGTHLKSTGEIGLIKIQKVERIADGVVRFIFTTGLHALKYVQEIERQVAEAASLAGGNRDNLVDSVRRLLQRAEEAERKAQRYTELYAAEFVKNLKAEPVGKYRLAVVELEDEELAKKVAQIATGRDKELVLLVVGGGRVTVYTGGADVGPIVKALREVGFRGGGSRTFAQGVYSGDVKTLIDAVKRALA</sequence>
<evidence type="ECO:0000255" key="1">
    <source>
        <dbReference type="HAMAP-Rule" id="MF_00036"/>
    </source>
</evidence>
<protein>
    <recommendedName>
        <fullName evidence="1">Alanine--tRNA ligase</fullName>
        <ecNumber evidence="1">6.1.1.7</ecNumber>
    </recommendedName>
    <alternativeName>
        <fullName evidence="1">Alanyl-tRNA synthetase</fullName>
        <shortName evidence="1">AlaRS</shortName>
    </alternativeName>
</protein>